<organism>
    <name type="scientific">Rickettsia prowazekii (strain Madrid E)</name>
    <dbReference type="NCBI Taxonomy" id="272947"/>
    <lineage>
        <taxon>Bacteria</taxon>
        <taxon>Pseudomonadati</taxon>
        <taxon>Pseudomonadota</taxon>
        <taxon>Alphaproteobacteria</taxon>
        <taxon>Rickettsiales</taxon>
        <taxon>Rickettsiaceae</taxon>
        <taxon>Rickettsieae</taxon>
        <taxon>Rickettsia</taxon>
        <taxon>typhus group</taxon>
    </lineage>
</organism>
<reference key="1">
    <citation type="journal article" date="1998" name="Nature">
        <title>The genome sequence of Rickettsia prowazekii and the origin of mitochondria.</title>
        <authorList>
            <person name="Andersson S.G.E."/>
            <person name="Zomorodipour A."/>
            <person name="Andersson J.O."/>
            <person name="Sicheritz-Ponten T."/>
            <person name="Alsmark U.C.M."/>
            <person name="Podowski R.M."/>
            <person name="Naeslund A.K."/>
            <person name="Eriksson A.-S."/>
            <person name="Winkler H.H."/>
            <person name="Kurland C.G."/>
        </authorList>
    </citation>
    <scope>NUCLEOTIDE SEQUENCE [LARGE SCALE GENOMIC DNA]</scope>
    <source>
        <strain>Madrid E</strain>
    </source>
</reference>
<name>Y296_RICPR</name>
<feature type="signal peptide" evidence="1">
    <location>
        <begin position="1"/>
        <end position="19"/>
    </location>
</feature>
<feature type="chain" id="PRO_0000014225" description="Uncharacterized protein RP296">
    <location>
        <begin position="20"/>
        <end position="274"/>
    </location>
</feature>
<proteinExistence type="inferred from homology"/>
<keyword id="KW-1185">Reference proteome</keyword>
<keyword id="KW-0732">Signal</keyword>
<protein>
    <recommendedName>
        <fullName>Uncharacterized protein RP296</fullName>
    </recommendedName>
</protein>
<accession>Q9ZDN1</accession>
<sequence length="274" mass="31365">MKRINKVLLSLLCLVIAYAGYSQIIPTYSVDSVTIQNLLPNVDEDTLVLINIDNTIITPKSKLFRYQDNAYINFTKYLYSLAANNASVNKTIAKLIVQRQMMLVESQWVDLINKMKNQGATVLGLQEITAPCNLIENYERWLYTILYGLNINFTRKVNDKEVFRFNPSDAEAPIFYLGIIFTGNINKVNTLIEFLKIIPIPPKKIVIFANNKKDLENMDSYLSMVDIGYYGIEYFGWQMLPGSPDNQIAELQQSTFLNTGQWLEDDTAAKMLNK</sequence>
<evidence type="ECO:0000255" key="1"/>
<gene>
    <name type="ordered locus">RP296</name>
</gene>
<dbReference type="EMBL" id="AJ235271">
    <property type="protein sequence ID" value="CAA14757.1"/>
    <property type="molecule type" value="Genomic_DNA"/>
</dbReference>
<dbReference type="PIR" id="C71685">
    <property type="entry name" value="C71685"/>
</dbReference>
<dbReference type="RefSeq" id="NP_220680.1">
    <property type="nucleotide sequence ID" value="NC_000963.1"/>
</dbReference>
<dbReference type="RefSeq" id="WP_004597377.1">
    <property type="nucleotide sequence ID" value="NC_000963.1"/>
</dbReference>
<dbReference type="STRING" id="272947.gene:17555377"/>
<dbReference type="EnsemblBacteria" id="CAA14757">
    <property type="protein sequence ID" value="CAA14757"/>
    <property type="gene ID" value="CAA14757"/>
</dbReference>
<dbReference type="KEGG" id="rpr:RP296"/>
<dbReference type="PATRIC" id="fig|272947.5.peg.305"/>
<dbReference type="eggNOG" id="COG0546">
    <property type="taxonomic scope" value="Bacteria"/>
</dbReference>
<dbReference type="HOGENOM" id="CLU_986533_0_0_5"/>
<dbReference type="OrthoDB" id="7160295at2"/>
<dbReference type="Proteomes" id="UP000002480">
    <property type="component" value="Chromosome"/>
</dbReference>
<dbReference type="InterPro" id="IPR022565">
    <property type="entry name" value="DUF2608"/>
</dbReference>
<dbReference type="Pfam" id="PF11019">
    <property type="entry name" value="DUF2608"/>
    <property type="match status" value="1"/>
</dbReference>